<sequence length="118" mass="13206">MARIAGVNIPDNKHTVISLTYIYGVGRTTAQAICAATGVNPAAKIKDLSDEQIEQLRGEVAKLTTEGDLRREVNMKIKRLMDLGCYRGLRHRRGLPVRGQRTKTNARTRKGPRKPIRK</sequence>
<reference key="1">
    <citation type="journal article" date="2009" name="J. Bacteriol.">
        <title>Genome sequence of Azotobacter vinelandii, an obligate aerobe specialized to support diverse anaerobic metabolic processes.</title>
        <authorList>
            <person name="Setubal J.C."/>
            <person name="Dos Santos P."/>
            <person name="Goldman B.S."/>
            <person name="Ertesvaag H."/>
            <person name="Espin G."/>
            <person name="Rubio L.M."/>
            <person name="Valla S."/>
            <person name="Almeida N.F."/>
            <person name="Balasubramanian D."/>
            <person name="Cromes L."/>
            <person name="Curatti L."/>
            <person name="Du Z."/>
            <person name="Godsy E."/>
            <person name="Goodner B."/>
            <person name="Hellner-Burris K."/>
            <person name="Hernandez J.A."/>
            <person name="Houmiel K."/>
            <person name="Imperial J."/>
            <person name="Kennedy C."/>
            <person name="Larson T.J."/>
            <person name="Latreille P."/>
            <person name="Ligon L.S."/>
            <person name="Lu J."/>
            <person name="Maerk M."/>
            <person name="Miller N.M."/>
            <person name="Norton S."/>
            <person name="O'Carroll I.P."/>
            <person name="Paulsen I."/>
            <person name="Raulfs E.C."/>
            <person name="Roemer R."/>
            <person name="Rosser J."/>
            <person name="Segura D."/>
            <person name="Slater S."/>
            <person name="Stricklin S.L."/>
            <person name="Studholme D.J."/>
            <person name="Sun J."/>
            <person name="Viana C.J."/>
            <person name="Wallin E."/>
            <person name="Wang B."/>
            <person name="Wheeler C."/>
            <person name="Zhu H."/>
            <person name="Dean D.R."/>
            <person name="Dixon R."/>
            <person name="Wood D."/>
        </authorList>
    </citation>
    <scope>NUCLEOTIDE SEQUENCE [LARGE SCALE GENOMIC DNA]</scope>
    <source>
        <strain>DJ / ATCC BAA-1303</strain>
    </source>
</reference>
<organism>
    <name type="scientific">Azotobacter vinelandii (strain DJ / ATCC BAA-1303)</name>
    <dbReference type="NCBI Taxonomy" id="322710"/>
    <lineage>
        <taxon>Bacteria</taxon>
        <taxon>Pseudomonadati</taxon>
        <taxon>Pseudomonadota</taxon>
        <taxon>Gammaproteobacteria</taxon>
        <taxon>Pseudomonadales</taxon>
        <taxon>Pseudomonadaceae</taxon>
        <taxon>Azotobacter</taxon>
    </lineage>
</organism>
<dbReference type="EMBL" id="CP001157">
    <property type="protein sequence ID" value="ACO76898.1"/>
    <property type="molecule type" value="Genomic_DNA"/>
</dbReference>
<dbReference type="RefSeq" id="WP_012699324.1">
    <property type="nucleotide sequence ID" value="NZ_CP144736.1"/>
</dbReference>
<dbReference type="SMR" id="C1DKN5"/>
<dbReference type="STRING" id="322710.Avin_06470"/>
<dbReference type="EnsemblBacteria" id="ACO76898">
    <property type="protein sequence ID" value="ACO76898"/>
    <property type="gene ID" value="Avin_06470"/>
</dbReference>
<dbReference type="GeneID" id="88184058"/>
<dbReference type="KEGG" id="avn:Avin_06470"/>
<dbReference type="eggNOG" id="COG0099">
    <property type="taxonomic scope" value="Bacteria"/>
</dbReference>
<dbReference type="HOGENOM" id="CLU_103849_1_2_6"/>
<dbReference type="OrthoDB" id="9803610at2"/>
<dbReference type="Proteomes" id="UP000002424">
    <property type="component" value="Chromosome"/>
</dbReference>
<dbReference type="GO" id="GO:0005829">
    <property type="term" value="C:cytosol"/>
    <property type="evidence" value="ECO:0007669"/>
    <property type="project" value="TreeGrafter"/>
</dbReference>
<dbReference type="GO" id="GO:0015935">
    <property type="term" value="C:small ribosomal subunit"/>
    <property type="evidence" value="ECO:0007669"/>
    <property type="project" value="TreeGrafter"/>
</dbReference>
<dbReference type="GO" id="GO:0019843">
    <property type="term" value="F:rRNA binding"/>
    <property type="evidence" value="ECO:0007669"/>
    <property type="project" value="UniProtKB-UniRule"/>
</dbReference>
<dbReference type="GO" id="GO:0003735">
    <property type="term" value="F:structural constituent of ribosome"/>
    <property type="evidence" value="ECO:0007669"/>
    <property type="project" value="InterPro"/>
</dbReference>
<dbReference type="GO" id="GO:0000049">
    <property type="term" value="F:tRNA binding"/>
    <property type="evidence" value="ECO:0007669"/>
    <property type="project" value="UniProtKB-UniRule"/>
</dbReference>
<dbReference type="GO" id="GO:0006412">
    <property type="term" value="P:translation"/>
    <property type="evidence" value="ECO:0007669"/>
    <property type="project" value="UniProtKB-UniRule"/>
</dbReference>
<dbReference type="FunFam" id="1.10.8.50:FF:000001">
    <property type="entry name" value="30S ribosomal protein S13"/>
    <property type="match status" value="1"/>
</dbReference>
<dbReference type="FunFam" id="4.10.910.10:FF:000001">
    <property type="entry name" value="30S ribosomal protein S13"/>
    <property type="match status" value="1"/>
</dbReference>
<dbReference type="Gene3D" id="1.10.8.50">
    <property type="match status" value="1"/>
</dbReference>
<dbReference type="Gene3D" id="4.10.910.10">
    <property type="entry name" value="30s ribosomal protein s13, domain 2"/>
    <property type="match status" value="1"/>
</dbReference>
<dbReference type="HAMAP" id="MF_01315">
    <property type="entry name" value="Ribosomal_uS13"/>
    <property type="match status" value="1"/>
</dbReference>
<dbReference type="InterPro" id="IPR027437">
    <property type="entry name" value="Rbsml_uS13_C"/>
</dbReference>
<dbReference type="InterPro" id="IPR001892">
    <property type="entry name" value="Ribosomal_uS13"/>
</dbReference>
<dbReference type="InterPro" id="IPR010979">
    <property type="entry name" value="Ribosomal_uS13-like_H2TH"/>
</dbReference>
<dbReference type="InterPro" id="IPR019980">
    <property type="entry name" value="Ribosomal_uS13_bac-type"/>
</dbReference>
<dbReference type="InterPro" id="IPR018269">
    <property type="entry name" value="Ribosomal_uS13_CS"/>
</dbReference>
<dbReference type="NCBIfam" id="TIGR03631">
    <property type="entry name" value="uS13_bact"/>
    <property type="match status" value="1"/>
</dbReference>
<dbReference type="PANTHER" id="PTHR10871">
    <property type="entry name" value="30S RIBOSOMAL PROTEIN S13/40S RIBOSOMAL PROTEIN S18"/>
    <property type="match status" value="1"/>
</dbReference>
<dbReference type="PANTHER" id="PTHR10871:SF1">
    <property type="entry name" value="SMALL RIBOSOMAL SUBUNIT PROTEIN US13M"/>
    <property type="match status" value="1"/>
</dbReference>
<dbReference type="Pfam" id="PF00416">
    <property type="entry name" value="Ribosomal_S13"/>
    <property type="match status" value="1"/>
</dbReference>
<dbReference type="PIRSF" id="PIRSF002134">
    <property type="entry name" value="Ribosomal_S13"/>
    <property type="match status" value="1"/>
</dbReference>
<dbReference type="SUPFAM" id="SSF46946">
    <property type="entry name" value="S13-like H2TH domain"/>
    <property type="match status" value="1"/>
</dbReference>
<dbReference type="PROSITE" id="PS00646">
    <property type="entry name" value="RIBOSOMAL_S13_1"/>
    <property type="match status" value="1"/>
</dbReference>
<dbReference type="PROSITE" id="PS50159">
    <property type="entry name" value="RIBOSOMAL_S13_2"/>
    <property type="match status" value="1"/>
</dbReference>
<keyword id="KW-0687">Ribonucleoprotein</keyword>
<keyword id="KW-0689">Ribosomal protein</keyword>
<keyword id="KW-0694">RNA-binding</keyword>
<keyword id="KW-0699">rRNA-binding</keyword>
<keyword id="KW-0820">tRNA-binding</keyword>
<comment type="function">
    <text evidence="1">Located at the top of the head of the 30S subunit, it contacts several helices of the 16S rRNA. In the 70S ribosome it contacts the 23S rRNA (bridge B1a) and protein L5 of the 50S subunit (bridge B1b), connecting the 2 subunits; these bridges are implicated in subunit movement. Contacts the tRNAs in the A and P-sites.</text>
</comment>
<comment type="subunit">
    <text evidence="1">Part of the 30S ribosomal subunit. Forms a loose heterodimer with protein S19. Forms two bridges to the 50S subunit in the 70S ribosome.</text>
</comment>
<comment type="similarity">
    <text evidence="1">Belongs to the universal ribosomal protein uS13 family.</text>
</comment>
<proteinExistence type="inferred from homology"/>
<name>RS13_AZOVD</name>
<gene>
    <name evidence="1" type="primary">rpsM</name>
    <name type="ordered locus">Avin_06470</name>
</gene>
<evidence type="ECO:0000255" key="1">
    <source>
        <dbReference type="HAMAP-Rule" id="MF_01315"/>
    </source>
</evidence>
<evidence type="ECO:0000256" key="2">
    <source>
        <dbReference type="SAM" id="MobiDB-lite"/>
    </source>
</evidence>
<evidence type="ECO:0000305" key="3"/>
<accession>C1DKN5</accession>
<protein>
    <recommendedName>
        <fullName evidence="1">Small ribosomal subunit protein uS13</fullName>
    </recommendedName>
    <alternativeName>
        <fullName evidence="3">30S ribosomal protein S13</fullName>
    </alternativeName>
</protein>
<feature type="chain" id="PRO_1000214383" description="Small ribosomal subunit protein uS13">
    <location>
        <begin position="1"/>
        <end position="118"/>
    </location>
</feature>
<feature type="region of interest" description="Disordered" evidence="2">
    <location>
        <begin position="93"/>
        <end position="118"/>
    </location>
</feature>